<accession>A9ANA4</accession>
<sequence length="93" mass="9672">MAKTASPGATPPGNGAEPLPDNYETALAELETLVARMEGGALSLEDSLAAYRRGAALVAFCQQQLEKVEQQVRVLDGATLKPAAATDGEDDDL</sequence>
<organism>
    <name type="scientific">Burkholderia multivorans (strain ATCC 17616 / 249)</name>
    <dbReference type="NCBI Taxonomy" id="395019"/>
    <lineage>
        <taxon>Bacteria</taxon>
        <taxon>Pseudomonadati</taxon>
        <taxon>Pseudomonadota</taxon>
        <taxon>Betaproteobacteria</taxon>
        <taxon>Burkholderiales</taxon>
        <taxon>Burkholderiaceae</taxon>
        <taxon>Burkholderia</taxon>
        <taxon>Burkholderia cepacia complex</taxon>
    </lineage>
</organism>
<proteinExistence type="inferred from homology"/>
<name>EX7S_BURM1</name>
<feature type="chain" id="PRO_1000119906" description="Exodeoxyribonuclease 7 small subunit">
    <location>
        <begin position="1"/>
        <end position="93"/>
    </location>
</feature>
<feature type="region of interest" description="Disordered" evidence="2">
    <location>
        <begin position="1"/>
        <end position="22"/>
    </location>
</feature>
<reference key="1">
    <citation type="submission" date="2007-10" db="EMBL/GenBank/DDBJ databases">
        <title>Complete sequence of chromosome 2 of Burkholderia multivorans ATCC 17616.</title>
        <authorList>
            <person name="Copeland A."/>
            <person name="Lucas S."/>
            <person name="Lapidus A."/>
            <person name="Barry K."/>
            <person name="Glavina del Rio T."/>
            <person name="Dalin E."/>
            <person name="Tice H."/>
            <person name="Pitluck S."/>
            <person name="Chain P."/>
            <person name="Malfatti S."/>
            <person name="Shin M."/>
            <person name="Vergez L."/>
            <person name="Schmutz J."/>
            <person name="Larimer F."/>
            <person name="Land M."/>
            <person name="Hauser L."/>
            <person name="Kyrpides N."/>
            <person name="Kim E."/>
            <person name="Tiedje J."/>
            <person name="Richardson P."/>
        </authorList>
    </citation>
    <scope>NUCLEOTIDE SEQUENCE [LARGE SCALE GENOMIC DNA]</scope>
    <source>
        <strain>ATCC 17616 / 249</strain>
    </source>
</reference>
<reference key="2">
    <citation type="submission" date="2007-04" db="EMBL/GenBank/DDBJ databases">
        <title>Complete genome sequence of Burkholderia multivorans ATCC 17616.</title>
        <authorList>
            <person name="Ohtsubo Y."/>
            <person name="Yamashita A."/>
            <person name="Kurokawa K."/>
            <person name="Takami H."/>
            <person name="Yuhara S."/>
            <person name="Nishiyama E."/>
            <person name="Endo R."/>
            <person name="Miyazaki R."/>
            <person name="Ono A."/>
            <person name="Yano K."/>
            <person name="Ito M."/>
            <person name="Sota M."/>
            <person name="Yuji N."/>
            <person name="Hattori M."/>
            <person name="Tsuda M."/>
        </authorList>
    </citation>
    <scope>NUCLEOTIDE SEQUENCE [LARGE SCALE GENOMIC DNA]</scope>
    <source>
        <strain>ATCC 17616 / 249</strain>
    </source>
</reference>
<gene>
    <name evidence="1" type="primary">xseB</name>
    <name type="ordered locus">Bmul_4822</name>
    <name type="ordered locus">BMULJ_03694</name>
</gene>
<evidence type="ECO:0000255" key="1">
    <source>
        <dbReference type="HAMAP-Rule" id="MF_00337"/>
    </source>
</evidence>
<evidence type="ECO:0000256" key="2">
    <source>
        <dbReference type="SAM" id="MobiDB-lite"/>
    </source>
</evidence>
<keyword id="KW-0963">Cytoplasm</keyword>
<keyword id="KW-0269">Exonuclease</keyword>
<keyword id="KW-0378">Hydrolase</keyword>
<keyword id="KW-0540">Nuclease</keyword>
<keyword id="KW-1185">Reference proteome</keyword>
<protein>
    <recommendedName>
        <fullName evidence="1">Exodeoxyribonuclease 7 small subunit</fullName>
        <ecNumber evidence="1">3.1.11.6</ecNumber>
    </recommendedName>
    <alternativeName>
        <fullName evidence="1">Exodeoxyribonuclease VII small subunit</fullName>
        <shortName evidence="1">Exonuclease VII small subunit</shortName>
    </alternativeName>
</protein>
<dbReference type="EC" id="3.1.11.6" evidence="1"/>
<dbReference type="EMBL" id="CP000869">
    <property type="protein sequence ID" value="ABX18493.1"/>
    <property type="molecule type" value="Genomic_DNA"/>
</dbReference>
<dbReference type="EMBL" id="AP009386">
    <property type="protein sequence ID" value="BAG45566.1"/>
    <property type="molecule type" value="Genomic_DNA"/>
</dbReference>
<dbReference type="RefSeq" id="WP_006399451.1">
    <property type="nucleotide sequence ID" value="NC_010805.1"/>
</dbReference>
<dbReference type="SMR" id="A9ANA4"/>
<dbReference type="STRING" id="395019.BMULJ_03694"/>
<dbReference type="KEGG" id="bmj:BMULJ_03694"/>
<dbReference type="KEGG" id="bmu:Bmul_4822"/>
<dbReference type="eggNOG" id="COG1722">
    <property type="taxonomic scope" value="Bacteria"/>
</dbReference>
<dbReference type="HOGENOM" id="CLU_145918_2_0_4"/>
<dbReference type="Proteomes" id="UP000008815">
    <property type="component" value="Chromosome 2"/>
</dbReference>
<dbReference type="GO" id="GO:0005829">
    <property type="term" value="C:cytosol"/>
    <property type="evidence" value="ECO:0007669"/>
    <property type="project" value="TreeGrafter"/>
</dbReference>
<dbReference type="GO" id="GO:0009318">
    <property type="term" value="C:exodeoxyribonuclease VII complex"/>
    <property type="evidence" value="ECO:0007669"/>
    <property type="project" value="InterPro"/>
</dbReference>
<dbReference type="GO" id="GO:0008855">
    <property type="term" value="F:exodeoxyribonuclease VII activity"/>
    <property type="evidence" value="ECO:0007669"/>
    <property type="project" value="UniProtKB-UniRule"/>
</dbReference>
<dbReference type="GO" id="GO:0006308">
    <property type="term" value="P:DNA catabolic process"/>
    <property type="evidence" value="ECO:0007669"/>
    <property type="project" value="UniProtKB-UniRule"/>
</dbReference>
<dbReference type="Gene3D" id="1.10.287.1040">
    <property type="entry name" value="Exonuclease VII, small subunit"/>
    <property type="match status" value="1"/>
</dbReference>
<dbReference type="HAMAP" id="MF_00337">
    <property type="entry name" value="Exonuc_7_S"/>
    <property type="match status" value="1"/>
</dbReference>
<dbReference type="InterPro" id="IPR003761">
    <property type="entry name" value="Exonuc_VII_S"/>
</dbReference>
<dbReference type="InterPro" id="IPR037004">
    <property type="entry name" value="Exonuc_VII_ssu_sf"/>
</dbReference>
<dbReference type="NCBIfam" id="NF002141">
    <property type="entry name" value="PRK00977.1-5"/>
    <property type="match status" value="1"/>
</dbReference>
<dbReference type="NCBIfam" id="TIGR01280">
    <property type="entry name" value="xseB"/>
    <property type="match status" value="1"/>
</dbReference>
<dbReference type="PANTHER" id="PTHR34137">
    <property type="entry name" value="EXODEOXYRIBONUCLEASE 7 SMALL SUBUNIT"/>
    <property type="match status" value="1"/>
</dbReference>
<dbReference type="PANTHER" id="PTHR34137:SF1">
    <property type="entry name" value="EXODEOXYRIBONUCLEASE 7 SMALL SUBUNIT"/>
    <property type="match status" value="1"/>
</dbReference>
<dbReference type="Pfam" id="PF02609">
    <property type="entry name" value="Exonuc_VII_S"/>
    <property type="match status" value="1"/>
</dbReference>
<dbReference type="SUPFAM" id="SSF116842">
    <property type="entry name" value="XseB-like"/>
    <property type="match status" value="1"/>
</dbReference>
<comment type="function">
    <text evidence="1">Bidirectionally degrades single-stranded DNA into large acid-insoluble oligonucleotides, which are then degraded further into small acid-soluble oligonucleotides.</text>
</comment>
<comment type="catalytic activity">
    <reaction evidence="1">
        <text>Exonucleolytic cleavage in either 5'- to 3'- or 3'- to 5'-direction to yield nucleoside 5'-phosphates.</text>
        <dbReference type="EC" id="3.1.11.6"/>
    </reaction>
</comment>
<comment type="subunit">
    <text evidence="1">Heterooligomer composed of large and small subunits.</text>
</comment>
<comment type="subcellular location">
    <subcellularLocation>
        <location evidence="1">Cytoplasm</location>
    </subcellularLocation>
</comment>
<comment type="similarity">
    <text evidence="1">Belongs to the XseB family.</text>
</comment>